<comment type="function">
    <text evidence="1">Required for accurate and efficient protein synthesis under certain stress conditions. May act as a fidelity factor of the translation reaction, by catalyzing a one-codon backward translocation of tRNAs on improperly translocated ribosomes. Back-translocation proceeds from a post-translocation (POST) complex to a pre-translocation (PRE) complex, thus giving elongation factor G a second chance to translocate the tRNAs correctly. Binds to ribosomes in a GTP-dependent manner.</text>
</comment>
<comment type="catalytic activity">
    <reaction evidence="1">
        <text>GTP + H2O = GDP + phosphate + H(+)</text>
        <dbReference type="Rhea" id="RHEA:19669"/>
        <dbReference type="ChEBI" id="CHEBI:15377"/>
        <dbReference type="ChEBI" id="CHEBI:15378"/>
        <dbReference type="ChEBI" id="CHEBI:37565"/>
        <dbReference type="ChEBI" id="CHEBI:43474"/>
        <dbReference type="ChEBI" id="CHEBI:58189"/>
        <dbReference type="EC" id="3.6.5.n1"/>
    </reaction>
</comment>
<comment type="subcellular location">
    <subcellularLocation>
        <location evidence="1">Cell membrane</location>
        <topology evidence="1">Peripheral membrane protein</topology>
        <orientation evidence="1">Cytoplasmic side</orientation>
    </subcellularLocation>
</comment>
<comment type="similarity">
    <text evidence="1">Belongs to the TRAFAC class translation factor GTPase superfamily. Classic translation factor GTPase family. LepA subfamily.</text>
</comment>
<gene>
    <name evidence="1" type="primary">lepA</name>
    <name type="ordered locus">NT01CX_0061</name>
</gene>
<name>LEPA_CLONN</name>
<sequence>MQNDRKKHTRNFSIVAHIDHGKSTLADRLLEATGTLTQREMENQVLDKMELEKERGITIKSQAARLVYKRDDGEEYILNLIDTPGHVDFNYEVSRSLAACEGAILVVDATQGIQAQTLANCYLALDHDLEIVPVINKIDLPSARPDEVKEEIEDVIGIEAHDAPLVSAKTGLNIKDVLEAIVEKVPVPDGDEEAPLKALIFDSYYDSYKGVVCYVRIKDGVVKPGTKIKFMATNKEYEVTETGIFTPNFFPMKELRAGDVGYITASIKNLRDAGVGDTITEASRPAKEPLEGYRPAIPMVYSGIYPVDGAKYEELKEALEKLKLNDAALSYEPETSIALGFGFRCGFLGLLHMEIIQERIEREFNLDIITTAPSVIYNIYKRDGEMLKITNPTNMPDPTEIEKMEEPVVKASIITPSDFVGAVMELCQNKRGTFIDMEYIETTRVVVNYYIPLNEIIYDFFDMLKSKTKGYASLDYELNGYKQAKLVKLDMLLNGDVVDALSMIVPEERAYNKGRAIAEKLKEVIPRQMFEIPIQAAVGAKIIARETVKAMRKDVLAKCYGGDISRKRKLLEKQKEGKKRMRQIGSVEVPQEAFMSILKVD</sequence>
<proteinExistence type="inferred from homology"/>
<dbReference type="EC" id="3.6.5.n1" evidence="1"/>
<dbReference type="EMBL" id="CP000382">
    <property type="protein sequence ID" value="ABK62259.1"/>
    <property type="molecule type" value="Genomic_DNA"/>
</dbReference>
<dbReference type="RefSeq" id="WP_011722562.1">
    <property type="nucleotide sequence ID" value="NC_008593.1"/>
</dbReference>
<dbReference type="SMR" id="A0Q1R8"/>
<dbReference type="STRING" id="386415.NT01CX_0061"/>
<dbReference type="KEGG" id="cno:NT01CX_0061"/>
<dbReference type="PATRIC" id="fig|386415.7.peg.1600"/>
<dbReference type="eggNOG" id="COG0481">
    <property type="taxonomic scope" value="Bacteria"/>
</dbReference>
<dbReference type="HOGENOM" id="CLU_009995_3_3_9"/>
<dbReference type="Proteomes" id="UP000008220">
    <property type="component" value="Chromosome"/>
</dbReference>
<dbReference type="GO" id="GO:0005886">
    <property type="term" value="C:plasma membrane"/>
    <property type="evidence" value="ECO:0007669"/>
    <property type="project" value="UniProtKB-SubCell"/>
</dbReference>
<dbReference type="GO" id="GO:0005525">
    <property type="term" value="F:GTP binding"/>
    <property type="evidence" value="ECO:0007669"/>
    <property type="project" value="UniProtKB-UniRule"/>
</dbReference>
<dbReference type="GO" id="GO:0003924">
    <property type="term" value="F:GTPase activity"/>
    <property type="evidence" value="ECO:0007669"/>
    <property type="project" value="UniProtKB-UniRule"/>
</dbReference>
<dbReference type="GO" id="GO:0043022">
    <property type="term" value="F:ribosome binding"/>
    <property type="evidence" value="ECO:0007669"/>
    <property type="project" value="UniProtKB-UniRule"/>
</dbReference>
<dbReference type="GO" id="GO:0003746">
    <property type="term" value="F:translation elongation factor activity"/>
    <property type="evidence" value="ECO:0007669"/>
    <property type="project" value="UniProtKB-UniRule"/>
</dbReference>
<dbReference type="GO" id="GO:0045727">
    <property type="term" value="P:positive regulation of translation"/>
    <property type="evidence" value="ECO:0007669"/>
    <property type="project" value="UniProtKB-UniRule"/>
</dbReference>
<dbReference type="CDD" id="cd03699">
    <property type="entry name" value="EF4_II"/>
    <property type="match status" value="1"/>
</dbReference>
<dbReference type="CDD" id="cd16260">
    <property type="entry name" value="EF4_III"/>
    <property type="match status" value="1"/>
</dbReference>
<dbReference type="CDD" id="cd01890">
    <property type="entry name" value="LepA"/>
    <property type="match status" value="1"/>
</dbReference>
<dbReference type="CDD" id="cd03709">
    <property type="entry name" value="lepA_C"/>
    <property type="match status" value="1"/>
</dbReference>
<dbReference type="FunFam" id="3.40.50.300:FF:000078">
    <property type="entry name" value="Elongation factor 4"/>
    <property type="match status" value="1"/>
</dbReference>
<dbReference type="FunFam" id="2.40.30.10:FF:000015">
    <property type="entry name" value="Translation factor GUF1, mitochondrial"/>
    <property type="match status" value="1"/>
</dbReference>
<dbReference type="FunFam" id="3.30.70.240:FF:000007">
    <property type="entry name" value="Translation factor GUF1, mitochondrial"/>
    <property type="match status" value="1"/>
</dbReference>
<dbReference type="FunFam" id="3.30.70.2570:FF:000001">
    <property type="entry name" value="Translation factor GUF1, mitochondrial"/>
    <property type="match status" value="1"/>
</dbReference>
<dbReference type="FunFam" id="3.30.70.870:FF:000004">
    <property type="entry name" value="Translation factor GUF1, mitochondrial"/>
    <property type="match status" value="1"/>
</dbReference>
<dbReference type="Gene3D" id="3.30.70.240">
    <property type="match status" value="1"/>
</dbReference>
<dbReference type="Gene3D" id="3.30.70.2570">
    <property type="entry name" value="Elongation factor 4, C-terminal domain"/>
    <property type="match status" value="1"/>
</dbReference>
<dbReference type="Gene3D" id="3.30.70.870">
    <property type="entry name" value="Elongation Factor G (Translational Gtpase), domain 3"/>
    <property type="match status" value="1"/>
</dbReference>
<dbReference type="Gene3D" id="3.40.50.300">
    <property type="entry name" value="P-loop containing nucleotide triphosphate hydrolases"/>
    <property type="match status" value="1"/>
</dbReference>
<dbReference type="Gene3D" id="2.40.30.10">
    <property type="entry name" value="Translation factors"/>
    <property type="match status" value="1"/>
</dbReference>
<dbReference type="HAMAP" id="MF_00071">
    <property type="entry name" value="LepA"/>
    <property type="match status" value="1"/>
</dbReference>
<dbReference type="InterPro" id="IPR006297">
    <property type="entry name" value="EF-4"/>
</dbReference>
<dbReference type="InterPro" id="IPR035647">
    <property type="entry name" value="EFG_III/V"/>
</dbReference>
<dbReference type="InterPro" id="IPR000640">
    <property type="entry name" value="EFG_V-like"/>
</dbReference>
<dbReference type="InterPro" id="IPR004161">
    <property type="entry name" value="EFTu-like_2"/>
</dbReference>
<dbReference type="InterPro" id="IPR031157">
    <property type="entry name" value="G_TR_CS"/>
</dbReference>
<dbReference type="InterPro" id="IPR038363">
    <property type="entry name" value="LepA_C_sf"/>
</dbReference>
<dbReference type="InterPro" id="IPR013842">
    <property type="entry name" value="LepA_CTD"/>
</dbReference>
<dbReference type="InterPro" id="IPR035654">
    <property type="entry name" value="LepA_IV"/>
</dbReference>
<dbReference type="InterPro" id="IPR027417">
    <property type="entry name" value="P-loop_NTPase"/>
</dbReference>
<dbReference type="InterPro" id="IPR005225">
    <property type="entry name" value="Small_GTP-bd"/>
</dbReference>
<dbReference type="InterPro" id="IPR000795">
    <property type="entry name" value="T_Tr_GTP-bd_dom"/>
</dbReference>
<dbReference type="InterPro" id="IPR009000">
    <property type="entry name" value="Transl_B-barrel_sf"/>
</dbReference>
<dbReference type="NCBIfam" id="TIGR01393">
    <property type="entry name" value="lepA"/>
    <property type="match status" value="1"/>
</dbReference>
<dbReference type="NCBIfam" id="TIGR00231">
    <property type="entry name" value="small_GTP"/>
    <property type="match status" value="1"/>
</dbReference>
<dbReference type="PANTHER" id="PTHR43512:SF4">
    <property type="entry name" value="TRANSLATION FACTOR GUF1 HOMOLOG, CHLOROPLASTIC"/>
    <property type="match status" value="1"/>
</dbReference>
<dbReference type="PANTHER" id="PTHR43512">
    <property type="entry name" value="TRANSLATION FACTOR GUF1-RELATED"/>
    <property type="match status" value="1"/>
</dbReference>
<dbReference type="Pfam" id="PF00679">
    <property type="entry name" value="EFG_C"/>
    <property type="match status" value="1"/>
</dbReference>
<dbReference type="Pfam" id="PF00009">
    <property type="entry name" value="GTP_EFTU"/>
    <property type="match status" value="1"/>
</dbReference>
<dbReference type="Pfam" id="PF03144">
    <property type="entry name" value="GTP_EFTU_D2"/>
    <property type="match status" value="1"/>
</dbReference>
<dbReference type="Pfam" id="PF06421">
    <property type="entry name" value="LepA_C"/>
    <property type="match status" value="1"/>
</dbReference>
<dbReference type="PRINTS" id="PR00315">
    <property type="entry name" value="ELONGATNFCT"/>
</dbReference>
<dbReference type="SMART" id="SM00838">
    <property type="entry name" value="EFG_C"/>
    <property type="match status" value="1"/>
</dbReference>
<dbReference type="SUPFAM" id="SSF54980">
    <property type="entry name" value="EF-G C-terminal domain-like"/>
    <property type="match status" value="2"/>
</dbReference>
<dbReference type="SUPFAM" id="SSF52540">
    <property type="entry name" value="P-loop containing nucleoside triphosphate hydrolases"/>
    <property type="match status" value="1"/>
</dbReference>
<dbReference type="SUPFAM" id="SSF50447">
    <property type="entry name" value="Translation proteins"/>
    <property type="match status" value="1"/>
</dbReference>
<dbReference type="PROSITE" id="PS00301">
    <property type="entry name" value="G_TR_1"/>
    <property type="match status" value="1"/>
</dbReference>
<dbReference type="PROSITE" id="PS51722">
    <property type="entry name" value="G_TR_2"/>
    <property type="match status" value="1"/>
</dbReference>
<protein>
    <recommendedName>
        <fullName evidence="1">Elongation factor 4</fullName>
        <shortName evidence="1">EF-4</shortName>
        <ecNumber evidence="1">3.6.5.n1</ecNumber>
    </recommendedName>
    <alternativeName>
        <fullName evidence="1">Ribosomal back-translocase LepA</fullName>
    </alternativeName>
</protein>
<organism>
    <name type="scientific">Clostridium novyi (strain NT)</name>
    <dbReference type="NCBI Taxonomy" id="386415"/>
    <lineage>
        <taxon>Bacteria</taxon>
        <taxon>Bacillati</taxon>
        <taxon>Bacillota</taxon>
        <taxon>Clostridia</taxon>
        <taxon>Eubacteriales</taxon>
        <taxon>Clostridiaceae</taxon>
        <taxon>Clostridium</taxon>
    </lineage>
</organism>
<reference key="1">
    <citation type="journal article" date="2006" name="Nat. Biotechnol.">
        <title>The genome and transcriptomes of the anti-tumor agent Clostridium novyi-NT.</title>
        <authorList>
            <person name="Bettegowda C."/>
            <person name="Huang X."/>
            <person name="Lin J."/>
            <person name="Cheong I."/>
            <person name="Kohli M."/>
            <person name="Szabo S.A."/>
            <person name="Zhang X."/>
            <person name="Diaz L.A. Jr."/>
            <person name="Velculescu V.E."/>
            <person name="Parmigiani G."/>
            <person name="Kinzler K.W."/>
            <person name="Vogelstein B."/>
            <person name="Zhou S."/>
        </authorList>
    </citation>
    <scope>NUCLEOTIDE SEQUENCE [LARGE SCALE GENOMIC DNA]</scope>
    <source>
        <strain>NT</strain>
    </source>
</reference>
<evidence type="ECO:0000255" key="1">
    <source>
        <dbReference type="HAMAP-Rule" id="MF_00071"/>
    </source>
</evidence>
<feature type="chain" id="PRO_1000031991" description="Elongation factor 4">
    <location>
        <begin position="1"/>
        <end position="601"/>
    </location>
</feature>
<feature type="domain" description="tr-type G">
    <location>
        <begin position="7"/>
        <end position="189"/>
    </location>
</feature>
<feature type="binding site" evidence="1">
    <location>
        <begin position="19"/>
        <end position="24"/>
    </location>
    <ligand>
        <name>GTP</name>
        <dbReference type="ChEBI" id="CHEBI:37565"/>
    </ligand>
</feature>
<feature type="binding site" evidence="1">
    <location>
        <begin position="136"/>
        <end position="139"/>
    </location>
    <ligand>
        <name>GTP</name>
        <dbReference type="ChEBI" id="CHEBI:37565"/>
    </ligand>
</feature>
<keyword id="KW-1003">Cell membrane</keyword>
<keyword id="KW-0342">GTP-binding</keyword>
<keyword id="KW-0378">Hydrolase</keyword>
<keyword id="KW-0472">Membrane</keyword>
<keyword id="KW-0547">Nucleotide-binding</keyword>
<keyword id="KW-0648">Protein biosynthesis</keyword>
<keyword id="KW-1185">Reference proteome</keyword>
<accession>A0Q1R8</accession>